<evidence type="ECO:0000255" key="1">
    <source>
        <dbReference type="HAMAP-Rule" id="MF_00321"/>
    </source>
</evidence>
<accession>B0SC16</accession>
<dbReference type="EMBL" id="CP000777">
    <property type="protein sequence ID" value="ABZ93081.1"/>
    <property type="molecule type" value="Genomic_DNA"/>
</dbReference>
<dbReference type="RefSeq" id="WP_012387587.1">
    <property type="nucleotide sequence ID" value="NC_010842.1"/>
</dbReference>
<dbReference type="SMR" id="B0SC16"/>
<dbReference type="KEGG" id="lbf:LBF_0543"/>
<dbReference type="HOGENOM" id="CLU_033732_3_2_12"/>
<dbReference type="GO" id="GO:0005829">
    <property type="term" value="C:cytosol"/>
    <property type="evidence" value="ECO:0007669"/>
    <property type="project" value="TreeGrafter"/>
</dbReference>
<dbReference type="GO" id="GO:0005525">
    <property type="term" value="F:GTP binding"/>
    <property type="evidence" value="ECO:0007669"/>
    <property type="project" value="UniProtKB-UniRule"/>
</dbReference>
<dbReference type="GO" id="GO:0046872">
    <property type="term" value="F:metal ion binding"/>
    <property type="evidence" value="ECO:0007669"/>
    <property type="project" value="UniProtKB-KW"/>
</dbReference>
<dbReference type="GO" id="GO:0000917">
    <property type="term" value="P:division septum assembly"/>
    <property type="evidence" value="ECO:0007669"/>
    <property type="project" value="UniProtKB-KW"/>
</dbReference>
<dbReference type="CDD" id="cd01876">
    <property type="entry name" value="YihA_EngB"/>
    <property type="match status" value="1"/>
</dbReference>
<dbReference type="Gene3D" id="3.40.50.300">
    <property type="entry name" value="P-loop containing nucleotide triphosphate hydrolases"/>
    <property type="match status" value="1"/>
</dbReference>
<dbReference type="HAMAP" id="MF_00321">
    <property type="entry name" value="GTPase_EngB"/>
    <property type="match status" value="1"/>
</dbReference>
<dbReference type="InterPro" id="IPR030393">
    <property type="entry name" value="G_ENGB_dom"/>
</dbReference>
<dbReference type="InterPro" id="IPR006073">
    <property type="entry name" value="GTP-bd"/>
</dbReference>
<dbReference type="InterPro" id="IPR019987">
    <property type="entry name" value="GTP-bd_ribosome_bio_YsxC"/>
</dbReference>
<dbReference type="InterPro" id="IPR027417">
    <property type="entry name" value="P-loop_NTPase"/>
</dbReference>
<dbReference type="NCBIfam" id="TIGR03598">
    <property type="entry name" value="GTPase_YsxC"/>
    <property type="match status" value="1"/>
</dbReference>
<dbReference type="PANTHER" id="PTHR11649:SF13">
    <property type="entry name" value="ENGB-TYPE G DOMAIN-CONTAINING PROTEIN"/>
    <property type="match status" value="1"/>
</dbReference>
<dbReference type="PANTHER" id="PTHR11649">
    <property type="entry name" value="MSS1/TRME-RELATED GTP-BINDING PROTEIN"/>
    <property type="match status" value="1"/>
</dbReference>
<dbReference type="Pfam" id="PF01926">
    <property type="entry name" value="MMR_HSR1"/>
    <property type="match status" value="1"/>
</dbReference>
<dbReference type="SUPFAM" id="SSF52540">
    <property type="entry name" value="P-loop containing nucleoside triphosphate hydrolases"/>
    <property type="match status" value="1"/>
</dbReference>
<dbReference type="PROSITE" id="PS51706">
    <property type="entry name" value="G_ENGB"/>
    <property type="match status" value="1"/>
</dbReference>
<sequence length="213" mass="24110">MHKYSKEIPFPETKFFTSIAKLDEKEDLDSVQSIAFMGRSNSGKSSLLNALSNHRGLAKVSRTPGKTKLINIFRTKVGFNLVDLPGFGYSKASHKEHKDMMNLLEGFLNSWKQLKILFILCDSQRDFPEEELSTIEVAMEKKIKPVVIRTKIDKLNQSGQHKVRTEMEAAMNEIGIPFRVFYISASTGRGIGELREFILETLGIQTKVSNVEP</sequence>
<protein>
    <recommendedName>
        <fullName evidence="1">Probable GTP-binding protein EngB</fullName>
    </recommendedName>
</protein>
<reference key="1">
    <citation type="journal article" date="2008" name="PLoS ONE">
        <title>Genome sequence of the saprophyte Leptospira biflexa provides insights into the evolution of Leptospira and the pathogenesis of leptospirosis.</title>
        <authorList>
            <person name="Picardeau M."/>
            <person name="Bulach D.M."/>
            <person name="Bouchier C."/>
            <person name="Zuerner R.L."/>
            <person name="Zidane N."/>
            <person name="Wilson P.J."/>
            <person name="Creno S."/>
            <person name="Kuczek E.S."/>
            <person name="Bommezzadri S."/>
            <person name="Davis J.C."/>
            <person name="McGrath A."/>
            <person name="Johnson M.J."/>
            <person name="Boursaux-Eude C."/>
            <person name="Seemann T."/>
            <person name="Rouy Z."/>
            <person name="Coppel R.L."/>
            <person name="Rood J.I."/>
            <person name="Lajus A."/>
            <person name="Davies J.K."/>
            <person name="Medigue C."/>
            <person name="Adler B."/>
        </authorList>
    </citation>
    <scope>NUCLEOTIDE SEQUENCE [LARGE SCALE GENOMIC DNA]</scope>
    <source>
        <strain>Patoc 1 / Ames</strain>
    </source>
</reference>
<organism>
    <name type="scientific">Leptospira biflexa serovar Patoc (strain Patoc 1 / Ames)</name>
    <dbReference type="NCBI Taxonomy" id="355278"/>
    <lineage>
        <taxon>Bacteria</taxon>
        <taxon>Pseudomonadati</taxon>
        <taxon>Spirochaetota</taxon>
        <taxon>Spirochaetia</taxon>
        <taxon>Leptospirales</taxon>
        <taxon>Leptospiraceae</taxon>
        <taxon>Leptospira</taxon>
    </lineage>
</organism>
<name>ENGB_LEPBA</name>
<gene>
    <name evidence="1" type="primary">engB</name>
    <name type="ordered locus">LBF_0543</name>
</gene>
<proteinExistence type="inferred from homology"/>
<keyword id="KW-0131">Cell cycle</keyword>
<keyword id="KW-0132">Cell division</keyword>
<keyword id="KW-0342">GTP-binding</keyword>
<keyword id="KW-0460">Magnesium</keyword>
<keyword id="KW-0479">Metal-binding</keyword>
<keyword id="KW-0547">Nucleotide-binding</keyword>
<keyword id="KW-0717">Septation</keyword>
<feature type="chain" id="PRO_1000189926" description="Probable GTP-binding protein EngB">
    <location>
        <begin position="1"/>
        <end position="213"/>
    </location>
</feature>
<feature type="domain" description="EngB-type G" evidence="1">
    <location>
        <begin position="30"/>
        <end position="204"/>
    </location>
</feature>
<feature type="binding site" evidence="1">
    <location>
        <begin position="38"/>
        <end position="45"/>
    </location>
    <ligand>
        <name>GTP</name>
        <dbReference type="ChEBI" id="CHEBI:37565"/>
    </ligand>
</feature>
<feature type="binding site" evidence="1">
    <location>
        <position position="45"/>
    </location>
    <ligand>
        <name>Mg(2+)</name>
        <dbReference type="ChEBI" id="CHEBI:18420"/>
    </ligand>
</feature>
<feature type="binding site" evidence="1">
    <location>
        <begin position="65"/>
        <end position="69"/>
    </location>
    <ligand>
        <name>GTP</name>
        <dbReference type="ChEBI" id="CHEBI:37565"/>
    </ligand>
</feature>
<feature type="binding site" evidence="1">
    <location>
        <position position="67"/>
    </location>
    <ligand>
        <name>Mg(2+)</name>
        <dbReference type="ChEBI" id="CHEBI:18420"/>
    </ligand>
</feature>
<feature type="binding site" evidence="1">
    <location>
        <begin position="83"/>
        <end position="86"/>
    </location>
    <ligand>
        <name>GTP</name>
        <dbReference type="ChEBI" id="CHEBI:37565"/>
    </ligand>
</feature>
<feature type="binding site" evidence="1">
    <location>
        <begin position="150"/>
        <end position="153"/>
    </location>
    <ligand>
        <name>GTP</name>
        <dbReference type="ChEBI" id="CHEBI:37565"/>
    </ligand>
</feature>
<feature type="binding site" evidence="1">
    <location>
        <begin position="183"/>
        <end position="185"/>
    </location>
    <ligand>
        <name>GTP</name>
        <dbReference type="ChEBI" id="CHEBI:37565"/>
    </ligand>
</feature>
<comment type="function">
    <text evidence="1">Necessary for normal cell division and for the maintenance of normal septation.</text>
</comment>
<comment type="cofactor">
    <cofactor evidence="1">
        <name>Mg(2+)</name>
        <dbReference type="ChEBI" id="CHEBI:18420"/>
    </cofactor>
</comment>
<comment type="similarity">
    <text evidence="1">Belongs to the TRAFAC class TrmE-Era-EngA-EngB-Septin-like GTPase superfamily. EngB GTPase family.</text>
</comment>